<organism>
    <name type="scientific">Oryza sativa subsp. japonica</name>
    <name type="common">Rice</name>
    <dbReference type="NCBI Taxonomy" id="39947"/>
    <lineage>
        <taxon>Eukaryota</taxon>
        <taxon>Viridiplantae</taxon>
        <taxon>Streptophyta</taxon>
        <taxon>Embryophyta</taxon>
        <taxon>Tracheophyta</taxon>
        <taxon>Spermatophyta</taxon>
        <taxon>Magnoliopsida</taxon>
        <taxon>Liliopsida</taxon>
        <taxon>Poales</taxon>
        <taxon>Poaceae</taxon>
        <taxon>BOP clade</taxon>
        <taxon>Oryzoideae</taxon>
        <taxon>Oryzeae</taxon>
        <taxon>Oryzinae</taxon>
        <taxon>Oryza</taxon>
        <taxon>Oryza sativa</taxon>
    </lineage>
</organism>
<dbReference type="EC" id="4.4.1.14" evidence="1"/>
<dbReference type="EMBL" id="LC050636">
    <property type="protein sequence ID" value="BAU36891.1"/>
    <property type="molecule type" value="mRNA"/>
</dbReference>
<dbReference type="EMBL" id="AP000559">
    <property type="protein sequence ID" value="BAA84790.1"/>
    <property type="molecule type" value="Genomic_DNA"/>
</dbReference>
<dbReference type="EMBL" id="AP008212">
    <property type="protein sequence ID" value="BAF18603.1"/>
    <property type="molecule type" value="Genomic_DNA"/>
</dbReference>
<dbReference type="EMBL" id="AP014962">
    <property type="protein sequence ID" value="BAS95974.1"/>
    <property type="molecule type" value="Genomic_DNA"/>
</dbReference>
<dbReference type="EMBL" id="CM000143">
    <property type="protein sequence ID" value="EEE65026.1"/>
    <property type="molecule type" value="Genomic_DNA"/>
</dbReference>
<dbReference type="EMBL" id="AK065212">
    <property type="protein sequence ID" value="BAG89419.1"/>
    <property type="molecule type" value="mRNA"/>
</dbReference>
<dbReference type="SMR" id="Q9SNN8"/>
<dbReference type="FunCoup" id="Q9SNN8">
    <property type="interactions" value="431"/>
</dbReference>
<dbReference type="STRING" id="39947.Q9SNN8"/>
<dbReference type="PaxDb" id="39947-Q9SNN8"/>
<dbReference type="EnsemblPlants" id="Os06t0130400-01">
    <property type="protein sequence ID" value="Os06t0130400-01"/>
    <property type="gene ID" value="Os06g0130400"/>
</dbReference>
<dbReference type="GeneID" id="4340002"/>
<dbReference type="Gramene" id="Os06t0130400-01">
    <property type="protein sequence ID" value="Os06t0130400-01"/>
    <property type="gene ID" value="Os06g0130400"/>
</dbReference>
<dbReference type="KEGG" id="dosa:Os06g0130400"/>
<dbReference type="KEGG" id="osa:4340002"/>
<dbReference type="eggNOG" id="KOG0256">
    <property type="taxonomic scope" value="Eukaryota"/>
</dbReference>
<dbReference type="HOGENOM" id="CLU_017584_1_0_1"/>
<dbReference type="InParanoid" id="Q9SNN8"/>
<dbReference type="OMA" id="SAVEHMA"/>
<dbReference type="OrthoDB" id="691673at2759"/>
<dbReference type="UniPathway" id="UPA00384">
    <property type="reaction ID" value="UER00562"/>
</dbReference>
<dbReference type="Proteomes" id="UP000000763">
    <property type="component" value="Chromosome 6"/>
</dbReference>
<dbReference type="Proteomes" id="UP000007752">
    <property type="component" value="Chromosome 6"/>
</dbReference>
<dbReference type="Proteomes" id="UP000059680">
    <property type="component" value="Chromosome 6"/>
</dbReference>
<dbReference type="GO" id="GO:0033097">
    <property type="term" value="C:amyloplast membrane"/>
    <property type="evidence" value="ECO:0007669"/>
    <property type="project" value="UniProtKB-SubCell"/>
</dbReference>
<dbReference type="GO" id="GO:0016829">
    <property type="term" value="F:lyase activity"/>
    <property type="evidence" value="ECO:0007669"/>
    <property type="project" value="UniProtKB-KW"/>
</dbReference>
<dbReference type="GO" id="GO:0030170">
    <property type="term" value="F:pyridoxal phosphate binding"/>
    <property type="evidence" value="ECO:0007669"/>
    <property type="project" value="InterPro"/>
</dbReference>
<dbReference type="GO" id="GO:0008483">
    <property type="term" value="F:transaminase activity"/>
    <property type="evidence" value="ECO:0000318"/>
    <property type="project" value="GO_Central"/>
</dbReference>
<dbReference type="GO" id="GO:0006520">
    <property type="term" value="P:amino acid metabolic process"/>
    <property type="evidence" value="ECO:0000318"/>
    <property type="project" value="GO_Central"/>
</dbReference>
<dbReference type="GO" id="GO:0009693">
    <property type="term" value="P:ethylene biosynthetic process"/>
    <property type="evidence" value="ECO:0007669"/>
    <property type="project" value="UniProtKB-UniPathway"/>
</dbReference>
<dbReference type="CDD" id="cd00609">
    <property type="entry name" value="AAT_like"/>
    <property type="match status" value="1"/>
</dbReference>
<dbReference type="Gene3D" id="3.90.1150.10">
    <property type="entry name" value="Aspartate Aminotransferase, domain 1"/>
    <property type="match status" value="1"/>
</dbReference>
<dbReference type="Gene3D" id="3.40.640.10">
    <property type="entry name" value="Type I PLP-dependent aspartate aminotransferase-like (Major domain)"/>
    <property type="match status" value="1"/>
</dbReference>
<dbReference type="InterPro" id="IPR004839">
    <property type="entry name" value="Aminotransferase_I/II_large"/>
</dbReference>
<dbReference type="InterPro" id="IPR050478">
    <property type="entry name" value="Ethylene_sulfur-biosynth"/>
</dbReference>
<dbReference type="InterPro" id="IPR004838">
    <property type="entry name" value="NHTrfase_class1_PyrdxlP-BS"/>
</dbReference>
<dbReference type="InterPro" id="IPR015424">
    <property type="entry name" value="PyrdxlP-dep_Trfase"/>
</dbReference>
<dbReference type="InterPro" id="IPR015421">
    <property type="entry name" value="PyrdxlP-dep_Trfase_major"/>
</dbReference>
<dbReference type="InterPro" id="IPR015422">
    <property type="entry name" value="PyrdxlP-dep_Trfase_small"/>
</dbReference>
<dbReference type="PANTHER" id="PTHR43795:SF85">
    <property type="entry name" value="AMINOTRANSFERASE ACS10-RELATED"/>
    <property type="match status" value="1"/>
</dbReference>
<dbReference type="PANTHER" id="PTHR43795">
    <property type="entry name" value="BIFUNCTIONAL ASPARTATE AMINOTRANSFERASE AND GLUTAMATE/ASPARTATE-PREPHENATE AMINOTRANSFERASE-RELATED"/>
    <property type="match status" value="1"/>
</dbReference>
<dbReference type="Pfam" id="PF00155">
    <property type="entry name" value="Aminotran_1_2"/>
    <property type="match status" value="1"/>
</dbReference>
<dbReference type="PRINTS" id="PR00753">
    <property type="entry name" value="ACCSYNTHASE"/>
</dbReference>
<dbReference type="SUPFAM" id="SSF53383">
    <property type="entry name" value="PLP-dependent transferases"/>
    <property type="match status" value="1"/>
</dbReference>
<dbReference type="PROSITE" id="PS00105">
    <property type="entry name" value="AA_TRANSFER_CLASS_1"/>
    <property type="match status" value="1"/>
</dbReference>
<sequence>MRRSGNGGAAKKKKKRSASAASERRPRADGGMRIVVPLQGVVQGRGGLVLGSLIPCALFYFFQLYIKRNRASPPPPPGSPTAASAAAVSPIHRSLSRGLLAPRAALPAISARGASVRDDDSLYYAGLRRCAADPYHPVTNPSGIIQLGLAENYLSLDLVGRWMEEHAAEAASMAGGEDEDERELSIRGLAAYQPYDGILALKMALAGFMRQIMQGSVSFEPSQVVITSGATPAMEILSFCLADPGNAFLVPSPYYPGWDRDIKWRTGIELIPVPCRSTDNFNISITALEIAYNQAKKRGIKVRGVLISNPNNPTGSFVPKQTLHDLLEFAAEKNIHLISDEVFAGSTYGSGKFVSVAEVVDDLEDFDKGRVHIIYGLSKDLSLAGFRVGVIYSYNESIVTAAAKIARFSSVSTPTQRLLVAMLSDQKFISDYLKVNRERLRKMYHLFVDALDQVGIECYKSSGGFYCWADMSKFIRSYSEKGERKLWDRLLEEAKVNVTPGSSCHCIEPGWFRCCFTTLSEHDIPVLVQRLRTITDSHKPNH</sequence>
<comment type="function">
    <text evidence="1 4">Catalyzes the formation of 1-aminocyclopropane-1-carboxylate, a direct precursor of ethylene in higher plants (By similarity). Required for the regulation of starch grain size in endosperm (PubMed:26792122).</text>
</comment>
<comment type="catalytic activity">
    <reaction evidence="1">
        <text>S-adenosyl-L-methionine = 1-aminocyclopropane-1-carboxylate + S-methyl-5'-thioadenosine + H(+)</text>
        <dbReference type="Rhea" id="RHEA:21744"/>
        <dbReference type="ChEBI" id="CHEBI:15378"/>
        <dbReference type="ChEBI" id="CHEBI:17509"/>
        <dbReference type="ChEBI" id="CHEBI:58360"/>
        <dbReference type="ChEBI" id="CHEBI:59789"/>
        <dbReference type="EC" id="4.4.1.14"/>
    </reaction>
</comment>
<comment type="cofactor">
    <cofactor evidence="1">
        <name>pyridoxal 5'-phosphate</name>
        <dbReference type="ChEBI" id="CHEBI:597326"/>
    </cofactor>
</comment>
<comment type="pathway">
    <text evidence="7">Alkene biosynthesis; ethylene biosynthesis via S-adenosyl-L-methionine; ethylene from S-adenosyl-L-methionine: step 1/2.</text>
</comment>
<comment type="subcellular location">
    <subcellularLocation>
        <location evidence="4">Plastid</location>
        <location evidence="4">Amyloplast membrane</location>
    </subcellularLocation>
    <text evidence="4">Localizes to the amyloplast membrane surrounding starch grains in endosperm, pollen, and pericarp.</text>
</comment>
<comment type="tissue specificity">
    <text evidence="3">Expressed in leaves.</text>
</comment>
<comment type="disruption phenotype">
    <text evidence="4">Enlarged starch grains in endosperm, spherical starch grains in pollen, decreased number of chloroplasts in leaves, enlarged chloroplasts with increased number of starch granules in leaves, reduced number of total panicles and slight reduction of seed weight.</text>
</comment>
<comment type="similarity">
    <text evidence="7">Belongs to the class-I pyridoxal-phosphate-dependent aminotransferase family.</text>
</comment>
<reference key="1">
    <citation type="journal article" date="2016" name="Plant Physiol.">
        <title>Amyloplast membrane protein SUBSTANDARD STARCH GRAIN6 controls starch grain size in rice endosperm.</title>
        <authorList>
            <person name="Matsushima R."/>
            <person name="Maekawa M."/>
            <person name="Kusano M."/>
            <person name="Tomita K."/>
            <person name="Kondo H."/>
            <person name="Nishimura H."/>
            <person name="Crofts N."/>
            <person name="Fujita N."/>
            <person name="Sakamoto W."/>
        </authorList>
    </citation>
    <scope>NUCLEOTIDE SEQUENCE [MRNA]</scope>
    <scope>FUNCTION</scope>
    <scope>SUBCELLULAR LOCATION</scope>
    <scope>DISRUPTION PHENOTYPE</scope>
</reference>
<reference key="2">
    <citation type="journal article" date="2005" name="Nature">
        <title>The map-based sequence of the rice genome.</title>
        <authorList>
            <consortium name="International rice genome sequencing project (IRGSP)"/>
        </authorList>
    </citation>
    <scope>NUCLEOTIDE SEQUENCE [LARGE SCALE GENOMIC DNA]</scope>
    <source>
        <strain>cv. Nipponbare</strain>
    </source>
</reference>
<reference key="3">
    <citation type="journal article" date="2008" name="Nucleic Acids Res.">
        <title>The rice annotation project database (RAP-DB): 2008 update.</title>
        <authorList>
            <consortium name="The rice annotation project (RAP)"/>
        </authorList>
    </citation>
    <scope>GENOME REANNOTATION</scope>
    <source>
        <strain>cv. Nipponbare</strain>
    </source>
</reference>
<reference key="4">
    <citation type="journal article" date="2013" name="Rice">
        <title>Improvement of the Oryza sativa Nipponbare reference genome using next generation sequence and optical map data.</title>
        <authorList>
            <person name="Kawahara Y."/>
            <person name="de la Bastide M."/>
            <person name="Hamilton J.P."/>
            <person name="Kanamori H."/>
            <person name="McCombie W.R."/>
            <person name="Ouyang S."/>
            <person name="Schwartz D.C."/>
            <person name="Tanaka T."/>
            <person name="Wu J."/>
            <person name="Zhou S."/>
            <person name="Childs K.L."/>
            <person name="Davidson R.M."/>
            <person name="Lin H."/>
            <person name="Quesada-Ocampo L."/>
            <person name="Vaillancourt B."/>
            <person name="Sakai H."/>
            <person name="Lee S.S."/>
            <person name="Kim J."/>
            <person name="Numa H."/>
            <person name="Itoh T."/>
            <person name="Buell C.R."/>
            <person name="Matsumoto T."/>
        </authorList>
    </citation>
    <scope>GENOME REANNOTATION</scope>
    <source>
        <strain>cv. Nipponbare</strain>
    </source>
</reference>
<reference key="5">
    <citation type="journal article" date="2005" name="PLoS Biol.">
        <title>The genomes of Oryza sativa: a history of duplications.</title>
        <authorList>
            <person name="Yu J."/>
            <person name="Wang J."/>
            <person name="Lin W."/>
            <person name="Li S."/>
            <person name="Li H."/>
            <person name="Zhou J."/>
            <person name="Ni P."/>
            <person name="Dong W."/>
            <person name="Hu S."/>
            <person name="Zeng C."/>
            <person name="Zhang J."/>
            <person name="Zhang Y."/>
            <person name="Li R."/>
            <person name="Xu Z."/>
            <person name="Li S."/>
            <person name="Li X."/>
            <person name="Zheng H."/>
            <person name="Cong L."/>
            <person name="Lin L."/>
            <person name="Yin J."/>
            <person name="Geng J."/>
            <person name="Li G."/>
            <person name="Shi J."/>
            <person name="Liu J."/>
            <person name="Lv H."/>
            <person name="Li J."/>
            <person name="Wang J."/>
            <person name="Deng Y."/>
            <person name="Ran L."/>
            <person name="Shi X."/>
            <person name="Wang X."/>
            <person name="Wu Q."/>
            <person name="Li C."/>
            <person name="Ren X."/>
            <person name="Wang J."/>
            <person name="Wang X."/>
            <person name="Li D."/>
            <person name="Liu D."/>
            <person name="Zhang X."/>
            <person name="Ji Z."/>
            <person name="Zhao W."/>
            <person name="Sun Y."/>
            <person name="Zhang Z."/>
            <person name="Bao J."/>
            <person name="Han Y."/>
            <person name="Dong L."/>
            <person name="Ji J."/>
            <person name="Chen P."/>
            <person name="Wu S."/>
            <person name="Liu J."/>
            <person name="Xiao Y."/>
            <person name="Bu D."/>
            <person name="Tan J."/>
            <person name="Yang L."/>
            <person name="Ye C."/>
            <person name="Zhang J."/>
            <person name="Xu J."/>
            <person name="Zhou Y."/>
            <person name="Yu Y."/>
            <person name="Zhang B."/>
            <person name="Zhuang S."/>
            <person name="Wei H."/>
            <person name="Liu B."/>
            <person name="Lei M."/>
            <person name="Yu H."/>
            <person name="Li Y."/>
            <person name="Xu H."/>
            <person name="Wei S."/>
            <person name="He X."/>
            <person name="Fang L."/>
            <person name="Zhang Z."/>
            <person name="Zhang Y."/>
            <person name="Huang X."/>
            <person name="Su Z."/>
            <person name="Tong W."/>
            <person name="Li J."/>
            <person name="Tong Z."/>
            <person name="Li S."/>
            <person name="Ye J."/>
            <person name="Wang L."/>
            <person name="Fang L."/>
            <person name="Lei T."/>
            <person name="Chen C.-S."/>
            <person name="Chen H.-C."/>
            <person name="Xu Z."/>
            <person name="Li H."/>
            <person name="Huang H."/>
            <person name="Zhang F."/>
            <person name="Xu H."/>
            <person name="Li N."/>
            <person name="Zhao C."/>
            <person name="Li S."/>
            <person name="Dong L."/>
            <person name="Huang Y."/>
            <person name="Li L."/>
            <person name="Xi Y."/>
            <person name="Qi Q."/>
            <person name="Li W."/>
            <person name="Zhang B."/>
            <person name="Hu W."/>
            <person name="Zhang Y."/>
            <person name="Tian X."/>
            <person name="Jiao Y."/>
            <person name="Liang X."/>
            <person name="Jin J."/>
            <person name="Gao L."/>
            <person name="Zheng W."/>
            <person name="Hao B."/>
            <person name="Liu S.-M."/>
            <person name="Wang W."/>
            <person name="Yuan L."/>
            <person name="Cao M."/>
            <person name="McDermott J."/>
            <person name="Samudrala R."/>
            <person name="Wang J."/>
            <person name="Wong G.K.-S."/>
            <person name="Yang H."/>
        </authorList>
    </citation>
    <scope>NUCLEOTIDE SEQUENCE [LARGE SCALE GENOMIC DNA]</scope>
    <source>
        <strain>cv. Nipponbare</strain>
    </source>
</reference>
<reference key="6">
    <citation type="journal article" date="2003" name="Science">
        <title>Collection, mapping, and annotation of over 28,000 cDNA clones from japonica rice.</title>
        <authorList>
            <consortium name="The rice full-length cDNA consortium"/>
        </authorList>
    </citation>
    <scope>NUCLEOTIDE SEQUENCE [LARGE SCALE MRNA]</scope>
    <source>
        <strain>cv. Nipponbare</strain>
    </source>
</reference>
<reference key="7">
    <citation type="journal article" date="2006" name="Plant Physiol.">
        <title>Contribution of ethylene biosynthesis for resistance to blast fungus infection in young rice plants.</title>
        <authorList>
            <person name="Iwai T."/>
            <person name="Miyasaka A."/>
            <person name="Seo S."/>
            <person name="Ohashi Y."/>
        </authorList>
    </citation>
    <scope>TISSUE SPECIFICITY</scope>
    <scope>NOMENCLATURE</scope>
</reference>
<evidence type="ECO:0000250" key="1">
    <source>
        <dbReference type="UniProtKB" id="P37821"/>
    </source>
</evidence>
<evidence type="ECO:0000256" key="2">
    <source>
        <dbReference type="SAM" id="MobiDB-lite"/>
    </source>
</evidence>
<evidence type="ECO:0000269" key="3">
    <source>
    </source>
</evidence>
<evidence type="ECO:0000269" key="4">
    <source>
    </source>
</evidence>
<evidence type="ECO:0000303" key="5">
    <source>
    </source>
</evidence>
<evidence type="ECO:0000303" key="6">
    <source>
    </source>
</evidence>
<evidence type="ECO:0000305" key="7"/>
<evidence type="ECO:0000312" key="8">
    <source>
        <dbReference type="EMBL" id="BAA84790.1"/>
    </source>
</evidence>
<evidence type="ECO:0000312" key="9">
    <source>
        <dbReference type="EMBL" id="BAS95974.1"/>
    </source>
</evidence>
<evidence type="ECO:0000312" key="10">
    <source>
        <dbReference type="EMBL" id="EEE65026.1"/>
    </source>
</evidence>
<feature type="chain" id="PRO_0000455673" description="1-aminocyclopropane-1-carboxylate synthase 6">
    <location>
        <begin position="1"/>
        <end position="542"/>
    </location>
</feature>
<feature type="region of interest" description="Disordered" evidence="2">
    <location>
        <begin position="1"/>
        <end position="28"/>
    </location>
</feature>
<feature type="modified residue" description="N6-(pyridoxal phosphate)lysine" evidence="1">
    <location>
        <position position="379"/>
    </location>
</feature>
<feature type="sequence conflict" description="In Ref. 1; BAU36891." evidence="7" ref="1">
    <original>V</original>
    <variation>M</variation>
    <location>
        <position position="224"/>
    </location>
</feature>
<keyword id="KW-0035">Amyloplast</keyword>
<keyword id="KW-0266">Ethylene biosynthesis</keyword>
<keyword id="KW-0456">Lyase</keyword>
<keyword id="KW-0472">Membrane</keyword>
<keyword id="KW-0934">Plastid</keyword>
<keyword id="KW-0663">Pyridoxal phosphate</keyword>
<keyword id="KW-1185">Reference proteome</keyword>
<keyword id="KW-0949">S-adenosyl-L-methionine</keyword>
<name>1A16_ORYSJ</name>
<accession>Q9SNN8</accession>
<accession>A0A0P0WSK8</accession>
<accession>A0A0U5BZC1</accession>
<accession>B9FRB5</accession>
<proteinExistence type="evidence at transcript level"/>
<gene>
    <name evidence="5" type="primary">ACS6</name>
    <name evidence="7" type="synonym">ACC6</name>
    <name evidence="6" type="synonym">SSG6</name>
    <name evidence="9" type="ordered locus">Os06g0130400</name>
    <name evidence="7" type="ordered locus">LOC_Os06g03990</name>
    <name evidence="10" type="ORF">OsJ_19995</name>
    <name evidence="8" type="ORF">P0493C11.5</name>
</gene>
<protein>
    <recommendedName>
        <fullName evidence="5">1-aminocyclopropane-1-carboxylate synthase 6</fullName>
        <shortName evidence="5">ACC synthase 6</shortName>
        <shortName evidence="5">OsACS6</shortName>
        <ecNumber evidence="1">4.4.1.14</ecNumber>
    </recommendedName>
    <alternativeName>
        <fullName evidence="6">Protein SUBSTANDARD STARCH GRAIN 6</fullName>
    </alternativeName>
</protein>